<comment type="function">
    <text evidence="1 4">Serine/threonine kinase which is involved in male germ cell development and in mature sperm function (By similarity). May be involved in the Cre/Creb signaling pathway (By similarity). Phosphorylates CREB1 on 'Ser-133' in vitro and can stimulate Cre/Creb pathway in cells (PubMed:15964553). Phosphorylates CREM on 'Ser-116' in vitro (By similarity). Phosphorylates ODF2 on 'Ser-95' (By similarity).</text>
</comment>
<comment type="catalytic activity">
    <reaction evidence="4">
        <text>L-seryl-[protein] + ATP = O-phospho-L-seryl-[protein] + ADP + H(+)</text>
        <dbReference type="Rhea" id="RHEA:17989"/>
        <dbReference type="Rhea" id="RHEA-COMP:9863"/>
        <dbReference type="Rhea" id="RHEA-COMP:11604"/>
        <dbReference type="ChEBI" id="CHEBI:15378"/>
        <dbReference type="ChEBI" id="CHEBI:29999"/>
        <dbReference type="ChEBI" id="CHEBI:30616"/>
        <dbReference type="ChEBI" id="CHEBI:83421"/>
        <dbReference type="ChEBI" id="CHEBI:456216"/>
        <dbReference type="EC" id="2.7.11.1"/>
    </reaction>
</comment>
<comment type="catalytic activity">
    <reaction evidence="4">
        <text>L-threonyl-[protein] + ATP = O-phospho-L-threonyl-[protein] + ADP + H(+)</text>
        <dbReference type="Rhea" id="RHEA:46608"/>
        <dbReference type="Rhea" id="RHEA-COMP:11060"/>
        <dbReference type="Rhea" id="RHEA-COMP:11605"/>
        <dbReference type="ChEBI" id="CHEBI:15378"/>
        <dbReference type="ChEBI" id="CHEBI:30013"/>
        <dbReference type="ChEBI" id="CHEBI:30616"/>
        <dbReference type="ChEBI" id="CHEBI:61977"/>
        <dbReference type="ChEBI" id="CHEBI:456216"/>
        <dbReference type="EC" id="2.7.11.1"/>
    </reaction>
</comment>
<comment type="cofactor">
    <cofactor evidence="4">
        <name>Mg(2+)</name>
        <dbReference type="ChEBI" id="CHEBI:18420"/>
    </cofactor>
</comment>
<comment type="activity regulation">
    <text evidence="1">Activated by phosphorylation on Thr-197.</text>
</comment>
<comment type="subunit">
    <text evidence="1 4 6">Homodimer (By similarity). Interacts with HSP90; this interaction stabilizes and activates TSSK4 (By similarity). Interacts with ODF2 (via C-terminus); this interaction promotes ODF2 phosphorylation on 'Ser-95' (By similarity). May interact with CREM (By similarity). Interacts with CREB1; this interaction facilitates phosphorylation on 'Ser-133' (PubMed:15964553). Interacts with QRICH2 (PubMed:30683861).</text>
</comment>
<comment type="interaction">
    <interactant intactId="EBI-1202583">
        <id>Q6SA08</id>
    </interactant>
    <interactant intactId="EBI-711855">
        <id>P16220</id>
        <label>CREB1</label>
    </interactant>
    <organismsDiffer>false</organismsDiffer>
    <experiments>5</experiments>
</comment>
<comment type="subcellular location">
    <subcellularLocation>
        <location evidence="1">Cytoplasmic vesicle</location>
        <location evidence="1">Secretory vesicle</location>
        <location evidence="1">Acrosome</location>
    </subcellularLocation>
    <subcellularLocation>
        <location evidence="1">Cell projection</location>
        <location evidence="1">Cilium</location>
        <location evidence="1">Flagellum</location>
    </subcellularLocation>
    <text evidence="1">In spermatozoa, present in the sperm head and in the flagellum.</text>
</comment>
<comment type="alternative products">
    <event type="alternative splicing"/>
    <isoform>
        <id>Q6SA08-1</id>
        <name>1</name>
        <sequence type="displayed"/>
    </isoform>
    <isoform>
        <id>Q6SA08-2</id>
        <name>2</name>
        <sequence type="described" ref="VSP_023560"/>
    </isoform>
    <isoform>
        <id>Q6SA08-3</id>
        <name>3</name>
        <sequence type="described" ref="VSP_023559"/>
    </isoform>
</comment>
<comment type="tissue specificity">
    <text evidence="4">Expressed only in the testis.</text>
</comment>
<comment type="PTM">
    <text evidence="1">Activated by autophosphorylation on Thr-197. ODF2 potentiates the autophosphorylation activity of TSSK4 at Thr-197.</text>
</comment>
<comment type="PTM">
    <text evidence="1">Ubiquitinated; HSP90 activity negatively regulates ubiquitination and degradation.</text>
</comment>
<comment type="similarity">
    <text evidence="10">Belongs to the protein kinase superfamily. CAMK Ser/Thr protein kinase family.</text>
</comment>
<evidence type="ECO:0000250" key="1">
    <source>
        <dbReference type="UniProtKB" id="Q9D411"/>
    </source>
</evidence>
<evidence type="ECO:0000255" key="2">
    <source>
        <dbReference type="PROSITE-ProRule" id="PRU00159"/>
    </source>
</evidence>
<evidence type="ECO:0000255" key="3">
    <source>
        <dbReference type="PROSITE-ProRule" id="PRU10027"/>
    </source>
</evidence>
<evidence type="ECO:0000269" key="4">
    <source>
    </source>
</evidence>
<evidence type="ECO:0000269" key="5">
    <source>
    </source>
</evidence>
<evidence type="ECO:0000269" key="6">
    <source>
    </source>
</evidence>
<evidence type="ECO:0000303" key="7">
    <source>
    </source>
</evidence>
<evidence type="ECO:0000303" key="8">
    <source>
    </source>
</evidence>
<evidence type="ECO:0000303" key="9">
    <source>
    </source>
</evidence>
<evidence type="ECO:0000305" key="10"/>
<evidence type="ECO:0000305" key="11">
    <source>
    </source>
</evidence>
<evidence type="ECO:0000312" key="12">
    <source>
        <dbReference type="HGNC" id="HGNC:19825"/>
    </source>
</evidence>
<proteinExistence type="evidence at protein level"/>
<dbReference type="EC" id="2.7.11.1" evidence="4"/>
<dbReference type="EMBL" id="AY461663">
    <property type="protein sequence ID" value="AAS17971.1"/>
    <property type="molecule type" value="mRNA"/>
</dbReference>
<dbReference type="EMBL" id="AK131042">
    <property type="protein sequence ID" value="BAC85482.1"/>
    <property type="molecule type" value="mRNA"/>
</dbReference>
<dbReference type="EMBL" id="BC111088">
    <property type="protein sequence ID" value="AAI11089.1"/>
    <property type="molecule type" value="mRNA"/>
</dbReference>
<dbReference type="CCDS" id="CCDS53890.1">
    <molecule id="Q6SA08-2"/>
</dbReference>
<dbReference type="CCDS" id="CCDS76662.1">
    <molecule id="Q6SA08-3"/>
</dbReference>
<dbReference type="CCDS" id="CCDS9618.1">
    <molecule id="Q6SA08-1"/>
</dbReference>
<dbReference type="RefSeq" id="NP_001171668.1">
    <molecule id="Q6SA08-2"/>
    <property type="nucleotide sequence ID" value="NM_001184739.2"/>
</dbReference>
<dbReference type="RefSeq" id="NP_001294996.1">
    <molecule id="Q6SA08-3"/>
    <property type="nucleotide sequence ID" value="NM_001308067.2"/>
</dbReference>
<dbReference type="RefSeq" id="NP_777604.2">
    <molecule id="Q6SA08-1"/>
    <property type="nucleotide sequence ID" value="NM_174944.3"/>
</dbReference>
<dbReference type="SMR" id="Q6SA08"/>
<dbReference type="BioGRID" id="129625">
    <property type="interactions" value="8"/>
</dbReference>
<dbReference type="FunCoup" id="Q6SA08">
    <property type="interactions" value="122"/>
</dbReference>
<dbReference type="IntAct" id="Q6SA08">
    <property type="interactions" value="6"/>
</dbReference>
<dbReference type="STRING" id="9606.ENSP00000339179"/>
<dbReference type="BindingDB" id="Q6SA08"/>
<dbReference type="ChEMBL" id="CHEMBL4295868"/>
<dbReference type="GlyGen" id="Q6SA08">
    <property type="glycosylation" value="1 site, 1 O-linked glycan (1 site)"/>
</dbReference>
<dbReference type="iPTMnet" id="Q6SA08"/>
<dbReference type="PhosphoSitePlus" id="Q6SA08"/>
<dbReference type="BioMuta" id="TSSK4"/>
<dbReference type="DMDM" id="62287888"/>
<dbReference type="jPOST" id="Q6SA08"/>
<dbReference type="MassIVE" id="Q6SA08"/>
<dbReference type="PaxDb" id="9606-ENSP00000339179"/>
<dbReference type="PeptideAtlas" id="Q6SA08"/>
<dbReference type="ProteomicsDB" id="67353">
    <molecule id="Q6SA08-1"/>
</dbReference>
<dbReference type="ProteomicsDB" id="67354">
    <molecule id="Q6SA08-2"/>
</dbReference>
<dbReference type="ProteomicsDB" id="67355">
    <molecule id="Q6SA08-3"/>
</dbReference>
<dbReference type="Antibodypedia" id="22738">
    <property type="antibodies" value="139 antibodies from 23 providers"/>
</dbReference>
<dbReference type="DNASU" id="283629"/>
<dbReference type="Ensembl" id="ENST00000287913.10">
    <molecule id="Q6SA08-1"/>
    <property type="protein sequence ID" value="ENSP00000287913.6"/>
    <property type="gene ID" value="ENSG00000139908.15"/>
</dbReference>
<dbReference type="Ensembl" id="ENST00000339917.10">
    <molecule id="Q6SA08-2"/>
    <property type="protein sequence ID" value="ENSP00000339179.5"/>
    <property type="gene ID" value="ENSG00000139908.15"/>
</dbReference>
<dbReference type="Ensembl" id="ENST00000556621.5">
    <molecule id="Q6SA08-3"/>
    <property type="protein sequence ID" value="ENSP00000452054.1"/>
    <property type="gene ID" value="ENSG00000139908.15"/>
</dbReference>
<dbReference type="Ensembl" id="ENST00000643387.1">
    <molecule id="Q6SA08-1"/>
    <property type="protein sequence ID" value="ENSP00000495573.1"/>
    <property type="gene ID" value="ENSG00000285140.2"/>
</dbReference>
<dbReference type="Ensembl" id="ENST00000645264.1">
    <molecule id="Q6SA08-3"/>
    <property type="protein sequence ID" value="ENSP00000496404.1"/>
    <property type="gene ID" value="ENSG00000285140.2"/>
</dbReference>
<dbReference type="Ensembl" id="ENST00000645272.2">
    <molecule id="Q6SA08-2"/>
    <property type="protein sequence ID" value="ENSP00000496710.1"/>
    <property type="gene ID" value="ENSG00000285140.2"/>
</dbReference>
<dbReference type="GeneID" id="283629"/>
<dbReference type="KEGG" id="hsa:283629"/>
<dbReference type="MANE-Select" id="ENST00000339917.10">
    <molecule id="Q6SA08-2"/>
    <property type="protein sequence ID" value="ENSP00000339179.5"/>
    <property type="RefSeq nucleotide sequence ID" value="NM_001184739.2"/>
    <property type="RefSeq protein sequence ID" value="NP_001171668.1"/>
</dbReference>
<dbReference type="UCSC" id="uc001wne.4">
    <molecule id="Q6SA08-1"/>
    <property type="organism name" value="human"/>
</dbReference>
<dbReference type="AGR" id="HGNC:19825"/>
<dbReference type="CTD" id="283629"/>
<dbReference type="DisGeNET" id="283629"/>
<dbReference type="GeneCards" id="TSSK4"/>
<dbReference type="HGNC" id="HGNC:19825">
    <property type="gene designation" value="TSSK4"/>
</dbReference>
<dbReference type="HPA" id="ENSG00000139908">
    <property type="expression patterns" value="Tissue enriched (testis)"/>
</dbReference>
<dbReference type="MIM" id="610711">
    <property type="type" value="gene"/>
</dbReference>
<dbReference type="neXtProt" id="NX_Q6SA08"/>
<dbReference type="OpenTargets" id="ENSG00000139908"/>
<dbReference type="PharmGKB" id="PA134908318"/>
<dbReference type="VEuPathDB" id="HostDB:ENSG00000139908"/>
<dbReference type="eggNOG" id="KOG0583">
    <property type="taxonomic scope" value="Eukaryota"/>
</dbReference>
<dbReference type="GeneTree" id="ENSGT00940000161286"/>
<dbReference type="HOGENOM" id="CLU_000288_63_0_1"/>
<dbReference type="InParanoid" id="Q6SA08"/>
<dbReference type="OMA" id="EWIQHYG"/>
<dbReference type="OrthoDB" id="193931at2759"/>
<dbReference type="PAN-GO" id="Q6SA08">
    <property type="GO annotations" value="3 GO annotations based on evolutionary models"/>
</dbReference>
<dbReference type="PhylomeDB" id="Q6SA08"/>
<dbReference type="TreeFam" id="TF105333"/>
<dbReference type="BRENDA" id="2.7.11.1">
    <property type="organism ID" value="2681"/>
</dbReference>
<dbReference type="PathwayCommons" id="Q6SA08"/>
<dbReference type="SignaLink" id="Q6SA08"/>
<dbReference type="SIGNOR" id="Q6SA08"/>
<dbReference type="BioGRID-ORCS" id="283629">
    <property type="hits" value="51 hits in 1185 CRISPR screens"/>
</dbReference>
<dbReference type="ChiTaRS" id="TSSK4">
    <property type="organism name" value="human"/>
</dbReference>
<dbReference type="GenomeRNAi" id="283629"/>
<dbReference type="Pharos" id="Q6SA08">
    <property type="development level" value="Tbio"/>
</dbReference>
<dbReference type="PRO" id="PR:Q6SA08"/>
<dbReference type="Proteomes" id="UP000005640">
    <property type="component" value="Chromosome 14"/>
</dbReference>
<dbReference type="RNAct" id="Q6SA08">
    <property type="molecule type" value="protein"/>
</dbReference>
<dbReference type="Bgee" id="ENSG00000139908">
    <property type="expression patterns" value="Expressed in left testis and 106 other cell types or tissues"/>
</dbReference>
<dbReference type="ExpressionAtlas" id="Q6SA08">
    <property type="expression patterns" value="baseline and differential"/>
</dbReference>
<dbReference type="GO" id="GO:0001669">
    <property type="term" value="C:acrosomal vesicle"/>
    <property type="evidence" value="ECO:0007669"/>
    <property type="project" value="UniProtKB-SubCell"/>
</dbReference>
<dbReference type="GO" id="GO:0036126">
    <property type="term" value="C:sperm flagellum"/>
    <property type="evidence" value="ECO:0007669"/>
    <property type="project" value="Ensembl"/>
</dbReference>
<dbReference type="GO" id="GO:0005524">
    <property type="term" value="F:ATP binding"/>
    <property type="evidence" value="ECO:0000314"/>
    <property type="project" value="UniProtKB"/>
</dbReference>
<dbReference type="GO" id="GO:0000287">
    <property type="term" value="F:magnesium ion binding"/>
    <property type="evidence" value="ECO:0000314"/>
    <property type="project" value="UniProtKB"/>
</dbReference>
<dbReference type="GO" id="GO:0042803">
    <property type="term" value="F:protein homodimerization activity"/>
    <property type="evidence" value="ECO:0007669"/>
    <property type="project" value="Ensembl"/>
</dbReference>
<dbReference type="GO" id="GO:0106310">
    <property type="term" value="F:protein serine kinase activity"/>
    <property type="evidence" value="ECO:0007669"/>
    <property type="project" value="RHEA"/>
</dbReference>
<dbReference type="GO" id="GO:0004674">
    <property type="term" value="F:protein serine/threonine kinase activity"/>
    <property type="evidence" value="ECO:0000314"/>
    <property type="project" value="UniProtKB"/>
</dbReference>
<dbReference type="GO" id="GO:0044877">
    <property type="term" value="F:protein-containing complex binding"/>
    <property type="evidence" value="ECO:0007669"/>
    <property type="project" value="Ensembl"/>
</dbReference>
<dbReference type="GO" id="GO:0009566">
    <property type="term" value="P:fertilization"/>
    <property type="evidence" value="ECO:0007669"/>
    <property type="project" value="Ensembl"/>
</dbReference>
<dbReference type="GO" id="GO:0030317">
    <property type="term" value="P:flagellated sperm motility"/>
    <property type="evidence" value="ECO:0007669"/>
    <property type="project" value="Ensembl"/>
</dbReference>
<dbReference type="GO" id="GO:0032793">
    <property type="term" value="P:positive regulation of CREB transcription factor activity"/>
    <property type="evidence" value="ECO:0000314"/>
    <property type="project" value="UniProtKB"/>
</dbReference>
<dbReference type="GO" id="GO:0006468">
    <property type="term" value="P:protein phosphorylation"/>
    <property type="evidence" value="ECO:0000314"/>
    <property type="project" value="UniProtKB"/>
</dbReference>
<dbReference type="GO" id="GO:0007286">
    <property type="term" value="P:spermatid development"/>
    <property type="evidence" value="ECO:0007669"/>
    <property type="project" value="Ensembl"/>
</dbReference>
<dbReference type="CDD" id="cd14162">
    <property type="entry name" value="STKc_TSSK4-like"/>
    <property type="match status" value="1"/>
</dbReference>
<dbReference type="FunFam" id="3.30.200.20:FF:000042">
    <property type="entry name" value="Aurora kinase A"/>
    <property type="match status" value="1"/>
</dbReference>
<dbReference type="FunFam" id="1.10.510.10:FF:000501">
    <property type="entry name" value="testis-specific serine/threonine-protein kinase 4 isoform X1"/>
    <property type="match status" value="1"/>
</dbReference>
<dbReference type="Gene3D" id="1.10.510.10">
    <property type="entry name" value="Transferase(Phosphotransferase) domain 1"/>
    <property type="match status" value="1"/>
</dbReference>
<dbReference type="InterPro" id="IPR011009">
    <property type="entry name" value="Kinase-like_dom_sf"/>
</dbReference>
<dbReference type="InterPro" id="IPR000719">
    <property type="entry name" value="Prot_kinase_dom"/>
</dbReference>
<dbReference type="InterPro" id="IPR017441">
    <property type="entry name" value="Protein_kinase_ATP_BS"/>
</dbReference>
<dbReference type="InterPro" id="IPR008271">
    <property type="entry name" value="Ser/Thr_kinase_AS"/>
</dbReference>
<dbReference type="InterPro" id="IPR047908">
    <property type="entry name" value="TSSK4_cat"/>
</dbReference>
<dbReference type="PANTHER" id="PTHR24346">
    <property type="entry name" value="MAP/MICROTUBULE AFFINITY-REGULATING KINASE"/>
    <property type="match status" value="1"/>
</dbReference>
<dbReference type="PANTHER" id="PTHR24346:SF56">
    <property type="entry name" value="SERINE_THREONINE-PROTEIN KINASE MARK2"/>
    <property type="match status" value="1"/>
</dbReference>
<dbReference type="Pfam" id="PF00069">
    <property type="entry name" value="Pkinase"/>
    <property type="match status" value="1"/>
</dbReference>
<dbReference type="PIRSF" id="PIRSF000654">
    <property type="entry name" value="Integrin-linked_kinase"/>
    <property type="match status" value="1"/>
</dbReference>
<dbReference type="SMART" id="SM00220">
    <property type="entry name" value="S_TKc"/>
    <property type="match status" value="1"/>
</dbReference>
<dbReference type="SUPFAM" id="SSF56112">
    <property type="entry name" value="Protein kinase-like (PK-like)"/>
    <property type="match status" value="1"/>
</dbReference>
<dbReference type="PROSITE" id="PS00107">
    <property type="entry name" value="PROTEIN_KINASE_ATP"/>
    <property type="match status" value="1"/>
</dbReference>
<dbReference type="PROSITE" id="PS50011">
    <property type="entry name" value="PROTEIN_KINASE_DOM"/>
    <property type="match status" value="1"/>
</dbReference>
<dbReference type="PROSITE" id="PS00108">
    <property type="entry name" value="PROTEIN_KINASE_ST"/>
    <property type="match status" value="1"/>
</dbReference>
<name>TSSK4_HUMAN</name>
<gene>
    <name evidence="12" type="primary">TSSK4</name>
    <name evidence="12" type="synonym">C14orf20</name>
    <name evidence="12" type="synonym">STK22E</name>
    <name evidence="9" type="synonym">TSSK5</name>
</gene>
<organism>
    <name type="scientific">Homo sapiens</name>
    <name type="common">Human</name>
    <dbReference type="NCBI Taxonomy" id="9606"/>
    <lineage>
        <taxon>Eukaryota</taxon>
        <taxon>Metazoa</taxon>
        <taxon>Chordata</taxon>
        <taxon>Craniata</taxon>
        <taxon>Vertebrata</taxon>
        <taxon>Euteleostomi</taxon>
        <taxon>Mammalia</taxon>
        <taxon>Eutheria</taxon>
        <taxon>Euarchontoglires</taxon>
        <taxon>Primates</taxon>
        <taxon>Haplorrhini</taxon>
        <taxon>Catarrhini</taxon>
        <taxon>Hominidae</taxon>
        <taxon>Homo</taxon>
    </lineage>
</organism>
<accession>Q6SA08</accession>
<accession>Q2TA60</accession>
<accession>Q6ZNM2</accession>
<sequence length="328" mass="37454">MGKGDVLEAAPTTTAYHSLMDEYGYEVGKAIGHGSYGSVYEAFYTKQKVMVAVKIISKKKASDDYLNKFLPREIQVMKVLRHKYLINFYRAIESTSRVYIILELAQGGDVLEWIQRYGACSEPLAGKWFSQLTLGIAYLHSKSIVHRDLKLENLLLDKWENVKISDFGFAKMVPSNQPVGCSPSYRQVNCFSHLSQTYCGSFAYACPEILRGLPYNPFLSDTWSMGVILYTLVVAHLPFDDTNLKKLLRETQKEVTFPANHTISQECKNLILQMLRQATKRATILDIIKDSWVLKFQPEQPTHEIRLLEAMCQLHNTTKQHQSLQITT</sequence>
<keyword id="KW-0025">Alternative splicing</keyword>
<keyword id="KW-0067">ATP-binding</keyword>
<keyword id="KW-0966">Cell projection</keyword>
<keyword id="KW-0969">Cilium</keyword>
<keyword id="KW-0968">Cytoplasmic vesicle</keyword>
<keyword id="KW-0217">Developmental protein</keyword>
<keyword id="KW-0221">Differentiation</keyword>
<keyword id="KW-0282">Flagellum</keyword>
<keyword id="KW-0418">Kinase</keyword>
<keyword id="KW-0460">Magnesium</keyword>
<keyword id="KW-0479">Metal-binding</keyword>
<keyword id="KW-0547">Nucleotide-binding</keyword>
<keyword id="KW-0597">Phosphoprotein</keyword>
<keyword id="KW-1267">Proteomics identification</keyword>
<keyword id="KW-1185">Reference proteome</keyword>
<keyword id="KW-0723">Serine/threonine-protein kinase</keyword>
<keyword id="KW-0744">Spermatogenesis</keyword>
<keyword id="KW-0808">Transferase</keyword>
<keyword id="KW-0832">Ubl conjugation</keyword>
<protein>
    <recommendedName>
        <fullName evidence="12">Testis-specific serine/threonine-protein kinase 4</fullName>
        <shortName evidence="10">TSK-4</shortName>
        <shortName evidence="12">TSSK-4</shortName>
        <shortName evidence="10">Testis-specific kinase 4</shortName>
        <ecNumber evidence="4">2.7.11.1</ecNumber>
    </recommendedName>
    <alternativeName>
        <fullName evidence="12">Serine/threonine-protein kinase 22E</fullName>
    </alternativeName>
</protein>
<feature type="chain" id="PRO_0000086772" description="Testis-specific serine/threonine-protein kinase 4">
    <location>
        <begin position="1"/>
        <end position="328"/>
    </location>
</feature>
<feature type="domain" description="Protein kinase" evidence="2">
    <location>
        <begin position="25"/>
        <end position="293"/>
    </location>
</feature>
<feature type="active site" description="Proton acceptor" evidence="2 3">
    <location>
        <position position="148"/>
    </location>
</feature>
<feature type="binding site" evidence="2">
    <location>
        <begin position="31"/>
        <end position="39"/>
    </location>
    <ligand>
        <name>ATP</name>
        <dbReference type="ChEBI" id="CHEBI:30616"/>
    </ligand>
</feature>
<feature type="binding site" evidence="2 11">
    <location>
        <position position="54"/>
    </location>
    <ligand>
        <name>ATP</name>
        <dbReference type="ChEBI" id="CHEBI:30616"/>
    </ligand>
</feature>
<feature type="modified residue" description="Phosphothreonine" evidence="1">
    <location>
        <position position="197"/>
    </location>
</feature>
<feature type="splice variant" id="VSP_023559" description="In isoform 3." evidence="8">
    <location>
        <begin position="1"/>
        <end position="76"/>
    </location>
</feature>
<feature type="splice variant" id="VSP_023560" description="In isoform 2." evidence="7">
    <original>R</original>
    <variation>RLMPSLSAAGR</variation>
    <location>
        <position position="147"/>
    </location>
</feature>
<feature type="sequence variant" id="VAR_041247" description="In dbSNP:rs36036137." evidence="5">
    <original>H</original>
    <variation>Y</variation>
    <location>
        <position position="33"/>
    </location>
</feature>
<feature type="sequence variant" id="VAR_041248" description="In dbSNP:rs34083933." evidence="5">
    <original>Y</original>
    <variation>C</variation>
    <location>
        <position position="89"/>
    </location>
</feature>
<feature type="sequence variant" id="VAR_041249" description="In dbSNP:rs35468205." evidence="5">
    <original>V</original>
    <variation>M</variation>
    <location>
        <position position="145"/>
    </location>
</feature>
<feature type="sequence variant" id="VAR_041250" description="In dbSNP:rs1270764." evidence="5">
    <original>Q</original>
    <variation>R</variation>
    <location>
        <position position="196"/>
    </location>
</feature>
<feature type="sequence variant" id="VAR_041251" description="In dbSNP:rs35244223." evidence="5">
    <original>T</original>
    <variation>M</variation>
    <location>
        <position position="327"/>
    </location>
</feature>
<feature type="mutagenesis site" description="Loss of kinase activity." evidence="4">
    <original>K</original>
    <variation>M</variation>
    <location>
        <position position="54"/>
    </location>
</feature>
<feature type="sequence conflict" description="In Ref. 2; BAC85482." evidence="10" ref="2">
    <original>Q</original>
    <variation>R</variation>
    <location>
        <position position="115"/>
    </location>
</feature>
<reference key="1">
    <citation type="journal article" date="2005" name="Biochem. Biophys. Res. Commun.">
        <title>TSSK5, a novel member of the testis-specific serine/threonine kinase family, phosphorylates CREB at Ser-133, and stimulates the CRE/CREB responsive pathway.</title>
        <authorList>
            <person name="Chen X."/>
            <person name="Lin G."/>
            <person name="Wei Y."/>
            <person name="Hexige S."/>
            <person name="Niu Y."/>
            <person name="Liu L."/>
            <person name="Yang C."/>
            <person name="Yu L."/>
        </authorList>
    </citation>
    <scope>NUCLEOTIDE SEQUENCE [MRNA] (ISOFORM 1)</scope>
    <scope>FUNCTION</scope>
    <scope>CATALYTIC ACTIVITY</scope>
    <scope>COFACTOR</scope>
    <scope>INTERACTION WITH CREB1</scope>
    <scope>TISSUE SPECIFICITY</scope>
    <scope>MUTAGENESIS OF LYS-54</scope>
    <source>
        <tissue>Testis</tissue>
    </source>
</reference>
<reference key="2">
    <citation type="journal article" date="2004" name="Nat. Genet.">
        <title>Complete sequencing and characterization of 21,243 full-length human cDNAs.</title>
        <authorList>
            <person name="Ota T."/>
            <person name="Suzuki Y."/>
            <person name="Nishikawa T."/>
            <person name="Otsuki T."/>
            <person name="Sugiyama T."/>
            <person name="Irie R."/>
            <person name="Wakamatsu A."/>
            <person name="Hayashi K."/>
            <person name="Sato H."/>
            <person name="Nagai K."/>
            <person name="Kimura K."/>
            <person name="Makita H."/>
            <person name="Sekine M."/>
            <person name="Obayashi M."/>
            <person name="Nishi T."/>
            <person name="Shibahara T."/>
            <person name="Tanaka T."/>
            <person name="Ishii S."/>
            <person name="Yamamoto J."/>
            <person name="Saito K."/>
            <person name="Kawai Y."/>
            <person name="Isono Y."/>
            <person name="Nakamura Y."/>
            <person name="Nagahari K."/>
            <person name="Murakami K."/>
            <person name="Yasuda T."/>
            <person name="Iwayanagi T."/>
            <person name="Wagatsuma M."/>
            <person name="Shiratori A."/>
            <person name="Sudo H."/>
            <person name="Hosoiri T."/>
            <person name="Kaku Y."/>
            <person name="Kodaira H."/>
            <person name="Kondo H."/>
            <person name="Sugawara M."/>
            <person name="Takahashi M."/>
            <person name="Kanda K."/>
            <person name="Yokoi T."/>
            <person name="Furuya T."/>
            <person name="Kikkawa E."/>
            <person name="Omura Y."/>
            <person name="Abe K."/>
            <person name="Kamihara K."/>
            <person name="Katsuta N."/>
            <person name="Sato K."/>
            <person name="Tanikawa M."/>
            <person name="Yamazaki M."/>
            <person name="Ninomiya K."/>
            <person name="Ishibashi T."/>
            <person name="Yamashita H."/>
            <person name="Murakawa K."/>
            <person name="Fujimori K."/>
            <person name="Tanai H."/>
            <person name="Kimata M."/>
            <person name="Watanabe M."/>
            <person name="Hiraoka S."/>
            <person name="Chiba Y."/>
            <person name="Ishida S."/>
            <person name="Ono Y."/>
            <person name="Takiguchi S."/>
            <person name="Watanabe S."/>
            <person name="Yosida M."/>
            <person name="Hotuta T."/>
            <person name="Kusano J."/>
            <person name="Kanehori K."/>
            <person name="Takahashi-Fujii A."/>
            <person name="Hara H."/>
            <person name="Tanase T.-O."/>
            <person name="Nomura Y."/>
            <person name="Togiya S."/>
            <person name="Komai F."/>
            <person name="Hara R."/>
            <person name="Takeuchi K."/>
            <person name="Arita M."/>
            <person name="Imose N."/>
            <person name="Musashino K."/>
            <person name="Yuuki H."/>
            <person name="Oshima A."/>
            <person name="Sasaki N."/>
            <person name="Aotsuka S."/>
            <person name="Yoshikawa Y."/>
            <person name="Matsunawa H."/>
            <person name="Ichihara T."/>
            <person name="Shiohata N."/>
            <person name="Sano S."/>
            <person name="Moriya S."/>
            <person name="Momiyama H."/>
            <person name="Satoh N."/>
            <person name="Takami S."/>
            <person name="Terashima Y."/>
            <person name="Suzuki O."/>
            <person name="Nakagawa S."/>
            <person name="Senoh A."/>
            <person name="Mizoguchi H."/>
            <person name="Goto Y."/>
            <person name="Shimizu F."/>
            <person name="Wakebe H."/>
            <person name="Hishigaki H."/>
            <person name="Watanabe T."/>
            <person name="Sugiyama A."/>
            <person name="Takemoto M."/>
            <person name="Kawakami B."/>
            <person name="Yamazaki M."/>
            <person name="Watanabe K."/>
            <person name="Kumagai A."/>
            <person name="Itakura S."/>
            <person name="Fukuzumi Y."/>
            <person name="Fujimori Y."/>
            <person name="Komiyama M."/>
            <person name="Tashiro H."/>
            <person name="Tanigami A."/>
            <person name="Fujiwara T."/>
            <person name="Ono T."/>
            <person name="Yamada K."/>
            <person name="Fujii Y."/>
            <person name="Ozaki K."/>
            <person name="Hirao M."/>
            <person name="Ohmori Y."/>
            <person name="Kawabata A."/>
            <person name="Hikiji T."/>
            <person name="Kobatake N."/>
            <person name="Inagaki H."/>
            <person name="Ikema Y."/>
            <person name="Okamoto S."/>
            <person name="Okitani R."/>
            <person name="Kawakami T."/>
            <person name="Noguchi S."/>
            <person name="Itoh T."/>
            <person name="Shigeta K."/>
            <person name="Senba T."/>
            <person name="Matsumura K."/>
            <person name="Nakajima Y."/>
            <person name="Mizuno T."/>
            <person name="Morinaga M."/>
            <person name="Sasaki M."/>
            <person name="Togashi T."/>
            <person name="Oyama M."/>
            <person name="Hata H."/>
            <person name="Watanabe M."/>
            <person name="Komatsu T."/>
            <person name="Mizushima-Sugano J."/>
            <person name="Satoh T."/>
            <person name="Shirai Y."/>
            <person name="Takahashi Y."/>
            <person name="Nakagawa K."/>
            <person name="Okumura K."/>
            <person name="Nagase T."/>
            <person name="Nomura N."/>
            <person name="Kikuchi H."/>
            <person name="Masuho Y."/>
            <person name="Yamashita R."/>
            <person name="Nakai K."/>
            <person name="Yada T."/>
            <person name="Nakamura Y."/>
            <person name="Ohara O."/>
            <person name="Isogai T."/>
            <person name="Sugano S."/>
        </authorList>
    </citation>
    <scope>NUCLEOTIDE SEQUENCE [LARGE SCALE MRNA] (ISOFORM 2)</scope>
    <source>
        <tissue>Testis</tissue>
    </source>
</reference>
<reference key="3">
    <citation type="journal article" date="2004" name="Genome Res.">
        <title>The status, quality, and expansion of the NIH full-length cDNA project: the Mammalian Gene Collection (MGC).</title>
        <authorList>
            <consortium name="The MGC Project Team"/>
        </authorList>
    </citation>
    <scope>NUCLEOTIDE SEQUENCE [LARGE SCALE MRNA] (ISOFORM 3)</scope>
</reference>
<reference key="4">
    <citation type="journal article" date="2019" name="Nat. Commun.">
        <title>Loss-of-function mutations in QRICH2 cause male infertility with multiple morphological abnormalities of the sperm flagella.</title>
        <authorList>
            <person name="Shen Y."/>
            <person name="Zhang F."/>
            <person name="Li F."/>
            <person name="Jiang X."/>
            <person name="Yang Y."/>
            <person name="Li X."/>
            <person name="Li W."/>
            <person name="Wang X."/>
            <person name="Cheng J."/>
            <person name="Liu M."/>
            <person name="Zhang X."/>
            <person name="Yuan G."/>
            <person name="Pei X."/>
            <person name="Cai K."/>
            <person name="Hu F."/>
            <person name="Sun J."/>
            <person name="Yan L."/>
            <person name="Tang L."/>
            <person name="Jiang C."/>
            <person name="Tu W."/>
            <person name="Xu J."/>
            <person name="Wu H."/>
            <person name="Kong W."/>
            <person name="Li S."/>
            <person name="Wang K."/>
            <person name="Sheng K."/>
            <person name="Zhao X."/>
            <person name="Yue H."/>
            <person name="Yang X."/>
            <person name="Xu W."/>
        </authorList>
    </citation>
    <scope>INTERACTION WITH QRICH2</scope>
</reference>
<reference key="5">
    <citation type="journal article" date="2007" name="Nature">
        <title>Patterns of somatic mutation in human cancer genomes.</title>
        <authorList>
            <person name="Greenman C."/>
            <person name="Stephens P."/>
            <person name="Smith R."/>
            <person name="Dalgliesh G.L."/>
            <person name="Hunter C."/>
            <person name="Bignell G."/>
            <person name="Davies H."/>
            <person name="Teague J."/>
            <person name="Butler A."/>
            <person name="Stevens C."/>
            <person name="Edkins S."/>
            <person name="O'Meara S."/>
            <person name="Vastrik I."/>
            <person name="Schmidt E.E."/>
            <person name="Avis T."/>
            <person name="Barthorpe S."/>
            <person name="Bhamra G."/>
            <person name="Buck G."/>
            <person name="Choudhury B."/>
            <person name="Clements J."/>
            <person name="Cole J."/>
            <person name="Dicks E."/>
            <person name="Forbes S."/>
            <person name="Gray K."/>
            <person name="Halliday K."/>
            <person name="Harrison R."/>
            <person name="Hills K."/>
            <person name="Hinton J."/>
            <person name="Jenkinson A."/>
            <person name="Jones D."/>
            <person name="Menzies A."/>
            <person name="Mironenko T."/>
            <person name="Perry J."/>
            <person name="Raine K."/>
            <person name="Richardson D."/>
            <person name="Shepherd R."/>
            <person name="Small A."/>
            <person name="Tofts C."/>
            <person name="Varian J."/>
            <person name="Webb T."/>
            <person name="West S."/>
            <person name="Widaa S."/>
            <person name="Yates A."/>
            <person name="Cahill D.P."/>
            <person name="Louis D.N."/>
            <person name="Goldstraw P."/>
            <person name="Nicholson A.G."/>
            <person name="Brasseur F."/>
            <person name="Looijenga L."/>
            <person name="Weber B.L."/>
            <person name="Chiew Y.-E."/>
            <person name="DeFazio A."/>
            <person name="Greaves M.F."/>
            <person name="Green A.R."/>
            <person name="Campbell P."/>
            <person name="Birney E."/>
            <person name="Easton D.F."/>
            <person name="Chenevix-Trench G."/>
            <person name="Tan M.-H."/>
            <person name="Khoo S.K."/>
            <person name="Teh B.T."/>
            <person name="Yuen S.T."/>
            <person name="Leung S.Y."/>
            <person name="Wooster R."/>
            <person name="Futreal P.A."/>
            <person name="Stratton M.R."/>
        </authorList>
    </citation>
    <scope>VARIANTS [LARGE SCALE ANALYSIS] TYR-33; CYS-89; MET-145; ARG-196 AND MET-327</scope>
</reference>